<keyword id="KW-0479">Metal-binding</keyword>
<keyword id="KW-0533">Nickel</keyword>
<keyword id="KW-0862">Zinc</keyword>
<feature type="chain" id="PRO_0000129032" description="Hydrogenase maturation factor HypA">
    <location>
        <begin position="1"/>
        <end position="113"/>
    </location>
</feature>
<feature type="binding site" evidence="1">
    <location>
        <position position="2"/>
    </location>
    <ligand>
        <name>Ni(2+)</name>
        <dbReference type="ChEBI" id="CHEBI:49786"/>
    </ligand>
</feature>
<feature type="binding site" evidence="1">
    <location>
        <position position="73"/>
    </location>
    <ligand>
        <name>Zn(2+)</name>
        <dbReference type="ChEBI" id="CHEBI:29105"/>
    </ligand>
</feature>
<feature type="binding site" evidence="1">
    <location>
        <position position="76"/>
    </location>
    <ligand>
        <name>Zn(2+)</name>
        <dbReference type="ChEBI" id="CHEBI:29105"/>
    </ligand>
</feature>
<feature type="binding site" evidence="1">
    <location>
        <position position="89"/>
    </location>
    <ligand>
        <name>Zn(2+)</name>
        <dbReference type="ChEBI" id="CHEBI:29105"/>
    </ligand>
</feature>
<feature type="binding site" evidence="1">
    <location>
        <position position="92"/>
    </location>
    <ligand>
        <name>Zn(2+)</name>
        <dbReference type="ChEBI" id="CHEBI:29105"/>
    </ligand>
</feature>
<accession>Q43948</accession>
<name>HYPA_AZOCH</name>
<organism>
    <name type="scientific">Azotobacter chroococcum mcd 1</name>
    <dbReference type="NCBI Taxonomy" id="355"/>
    <lineage>
        <taxon>Bacteria</taxon>
        <taxon>Pseudomonadati</taxon>
        <taxon>Pseudomonadota</taxon>
        <taxon>Gammaproteobacteria</taxon>
        <taxon>Pseudomonadales</taxon>
        <taxon>Pseudomonadaceae</taxon>
        <taxon>Azotobacter</taxon>
    </lineage>
</organism>
<gene>
    <name evidence="1" type="primary">hypA</name>
    <name type="synonym">hupA</name>
</gene>
<evidence type="ECO:0000255" key="1">
    <source>
        <dbReference type="HAMAP-Rule" id="MF_00213"/>
    </source>
</evidence>
<evidence type="ECO:0000305" key="2"/>
<protein>
    <recommendedName>
        <fullName evidence="1">Hydrogenase maturation factor HypA</fullName>
    </recommendedName>
    <alternativeName>
        <fullName>Protein HupA</fullName>
    </alternativeName>
</protein>
<dbReference type="EMBL" id="L00674">
    <property type="protein sequence ID" value="AAA22132.1"/>
    <property type="molecule type" value="Genomic_DNA"/>
</dbReference>
<dbReference type="PIR" id="JN0646">
    <property type="entry name" value="JN0646"/>
</dbReference>
<dbReference type="SMR" id="Q43948"/>
<dbReference type="GO" id="GO:0016151">
    <property type="term" value="F:nickel cation binding"/>
    <property type="evidence" value="ECO:0007669"/>
    <property type="project" value="UniProtKB-UniRule"/>
</dbReference>
<dbReference type="GO" id="GO:0008270">
    <property type="term" value="F:zinc ion binding"/>
    <property type="evidence" value="ECO:0007669"/>
    <property type="project" value="UniProtKB-UniRule"/>
</dbReference>
<dbReference type="GO" id="GO:0051604">
    <property type="term" value="P:protein maturation"/>
    <property type="evidence" value="ECO:0007669"/>
    <property type="project" value="InterPro"/>
</dbReference>
<dbReference type="GO" id="GO:0036211">
    <property type="term" value="P:protein modification process"/>
    <property type="evidence" value="ECO:0007669"/>
    <property type="project" value="UniProtKB-UniRule"/>
</dbReference>
<dbReference type="FunFam" id="3.30.2320.80:FF:000001">
    <property type="entry name" value="Hydrogenase maturation factor HypA"/>
    <property type="match status" value="1"/>
</dbReference>
<dbReference type="Gene3D" id="3.30.2320.80">
    <property type="match status" value="1"/>
</dbReference>
<dbReference type="HAMAP" id="MF_00213">
    <property type="entry name" value="HypA_HybF"/>
    <property type="match status" value="1"/>
</dbReference>
<dbReference type="InterPro" id="IPR020538">
    <property type="entry name" value="Hydgase_Ni_incorp_HypA/HybF_CS"/>
</dbReference>
<dbReference type="InterPro" id="IPR000688">
    <property type="entry name" value="HypA/HybF"/>
</dbReference>
<dbReference type="NCBIfam" id="TIGR00100">
    <property type="entry name" value="hypA"/>
    <property type="match status" value="1"/>
</dbReference>
<dbReference type="NCBIfam" id="NF009046">
    <property type="entry name" value="PRK12380.1"/>
    <property type="match status" value="1"/>
</dbReference>
<dbReference type="PANTHER" id="PTHR34535">
    <property type="entry name" value="HYDROGENASE MATURATION FACTOR HYPA"/>
    <property type="match status" value="1"/>
</dbReference>
<dbReference type="PANTHER" id="PTHR34535:SF3">
    <property type="entry name" value="HYDROGENASE MATURATION FACTOR HYPA"/>
    <property type="match status" value="1"/>
</dbReference>
<dbReference type="Pfam" id="PF01155">
    <property type="entry name" value="HypA"/>
    <property type="match status" value="1"/>
</dbReference>
<dbReference type="PIRSF" id="PIRSF004761">
    <property type="entry name" value="Hydrgn_mat_HypA"/>
    <property type="match status" value="1"/>
</dbReference>
<dbReference type="PROSITE" id="PS01249">
    <property type="entry name" value="HYPA"/>
    <property type="match status" value="1"/>
</dbReference>
<sequence>MHEMSIAEGIVQLLEEQAAAQRFERVKAVWLEIGPLAAVEVESLRFCFEAVTRGSLAEGARLEIVELPGRAWCLGCNASVAIRQRYDACPQCGSYRLQVTQGDELRVKELEVE</sequence>
<proteinExistence type="inferred from homology"/>
<comment type="function">
    <text evidence="1">Involved in the maturation of [NiFe] hydrogenases. Required for nickel insertion into the metal center of the hydrogenase.</text>
</comment>
<comment type="similarity">
    <text evidence="1 2">Belongs to the HypA/HybF family.</text>
</comment>
<reference key="1">
    <citation type="journal article" date="1993" name="Gene">
        <title>The Azotobacter chroococcum hydrogenase gene cluster: sequences and genetic analysis of four accessory genes, hupA, hupB, hupY and hupC.</title>
        <authorList>
            <person name="Tibelius K.H."/>
            <person name="Du L."/>
            <person name="Tito D."/>
            <person name="Stejskal F."/>
        </authorList>
    </citation>
    <scope>NUCLEOTIDE SEQUENCE [GENOMIC DNA]</scope>
</reference>
<reference key="2">
    <citation type="journal article" date="1993" name="Gene">
        <authorList>
            <person name="Tibelius K.H."/>
            <person name="Du L."/>
            <person name="Tito D."/>
            <person name="Stejskal F."/>
        </authorList>
    </citation>
    <scope>ERRATUM OF PUBMED:8486288</scope>
</reference>